<comment type="function">
    <text evidence="1">Catalyzes the last two sequential reactions in the de novo biosynthetic pathway for UDP-N-acetylglucosamine (UDP-GlcNAc). The C-terminal domain catalyzes the transfer of acetyl group from acetyl coenzyme A to glucosamine-1-phosphate (GlcN-1-P) to produce N-acetylglucosamine-1-phosphate (GlcNAc-1-P), which is converted into UDP-GlcNAc by the transfer of uridine 5-monophosphate (from uridine 5-triphosphate), a reaction catalyzed by the N-terminal domain.</text>
</comment>
<comment type="catalytic activity">
    <reaction evidence="1">
        <text>alpha-D-glucosamine 1-phosphate + acetyl-CoA = N-acetyl-alpha-D-glucosamine 1-phosphate + CoA + H(+)</text>
        <dbReference type="Rhea" id="RHEA:13725"/>
        <dbReference type="ChEBI" id="CHEBI:15378"/>
        <dbReference type="ChEBI" id="CHEBI:57287"/>
        <dbReference type="ChEBI" id="CHEBI:57288"/>
        <dbReference type="ChEBI" id="CHEBI:57776"/>
        <dbReference type="ChEBI" id="CHEBI:58516"/>
        <dbReference type="EC" id="2.3.1.157"/>
    </reaction>
</comment>
<comment type="catalytic activity">
    <reaction evidence="1">
        <text>N-acetyl-alpha-D-glucosamine 1-phosphate + UTP + H(+) = UDP-N-acetyl-alpha-D-glucosamine + diphosphate</text>
        <dbReference type="Rhea" id="RHEA:13509"/>
        <dbReference type="ChEBI" id="CHEBI:15378"/>
        <dbReference type="ChEBI" id="CHEBI:33019"/>
        <dbReference type="ChEBI" id="CHEBI:46398"/>
        <dbReference type="ChEBI" id="CHEBI:57705"/>
        <dbReference type="ChEBI" id="CHEBI:57776"/>
        <dbReference type="EC" id="2.7.7.23"/>
    </reaction>
</comment>
<comment type="cofactor">
    <cofactor evidence="1">
        <name>Mg(2+)</name>
        <dbReference type="ChEBI" id="CHEBI:18420"/>
    </cofactor>
    <text evidence="1">Binds 1 Mg(2+) ion per subunit.</text>
</comment>
<comment type="pathway">
    <text evidence="1">Nucleotide-sugar biosynthesis; UDP-N-acetyl-alpha-D-glucosamine biosynthesis; N-acetyl-alpha-D-glucosamine 1-phosphate from alpha-D-glucosamine 6-phosphate (route II): step 2/2.</text>
</comment>
<comment type="pathway">
    <text evidence="1">Nucleotide-sugar biosynthesis; UDP-N-acetyl-alpha-D-glucosamine biosynthesis; UDP-N-acetyl-alpha-D-glucosamine from N-acetyl-alpha-D-glucosamine 1-phosphate: step 1/1.</text>
</comment>
<comment type="pathway">
    <text evidence="1">Bacterial outer membrane biogenesis; LPS lipid A biosynthesis.</text>
</comment>
<comment type="subunit">
    <text evidence="1">Homotrimer.</text>
</comment>
<comment type="subcellular location">
    <subcellularLocation>
        <location evidence="1">Cytoplasm</location>
    </subcellularLocation>
</comment>
<comment type="similarity">
    <text evidence="1">In the N-terminal section; belongs to the N-acetylglucosamine-1-phosphate uridyltransferase family.</text>
</comment>
<comment type="similarity">
    <text evidence="1">In the C-terminal section; belongs to the transferase hexapeptide repeat family.</text>
</comment>
<keyword id="KW-0012">Acyltransferase</keyword>
<keyword id="KW-0133">Cell shape</keyword>
<keyword id="KW-0961">Cell wall biogenesis/degradation</keyword>
<keyword id="KW-0963">Cytoplasm</keyword>
<keyword id="KW-0460">Magnesium</keyword>
<keyword id="KW-0479">Metal-binding</keyword>
<keyword id="KW-0511">Multifunctional enzyme</keyword>
<keyword id="KW-0548">Nucleotidyltransferase</keyword>
<keyword id="KW-0573">Peptidoglycan synthesis</keyword>
<keyword id="KW-0677">Repeat</keyword>
<keyword id="KW-0808">Transferase</keyword>
<name>GLMU_BURM7</name>
<evidence type="ECO:0000255" key="1">
    <source>
        <dbReference type="HAMAP-Rule" id="MF_01631"/>
    </source>
</evidence>
<feature type="chain" id="PRO_1000056142" description="Bifunctional protein GlmU">
    <location>
        <begin position="1"/>
        <end position="453"/>
    </location>
</feature>
<feature type="region of interest" description="Pyrophosphorylase" evidence="1">
    <location>
        <begin position="1"/>
        <end position="225"/>
    </location>
</feature>
<feature type="region of interest" description="Linker" evidence="1">
    <location>
        <begin position="226"/>
        <end position="246"/>
    </location>
</feature>
<feature type="region of interest" description="N-acetyltransferase" evidence="1">
    <location>
        <begin position="247"/>
        <end position="453"/>
    </location>
</feature>
<feature type="active site" description="Proton acceptor" evidence="1">
    <location>
        <position position="359"/>
    </location>
</feature>
<feature type="binding site" evidence="1">
    <location>
        <begin position="6"/>
        <end position="9"/>
    </location>
    <ligand>
        <name>UDP-N-acetyl-alpha-D-glucosamine</name>
        <dbReference type="ChEBI" id="CHEBI:57705"/>
    </ligand>
</feature>
<feature type="binding site" evidence="1">
    <location>
        <position position="20"/>
    </location>
    <ligand>
        <name>UDP-N-acetyl-alpha-D-glucosamine</name>
        <dbReference type="ChEBI" id="CHEBI:57705"/>
    </ligand>
</feature>
<feature type="binding site" evidence="1">
    <location>
        <position position="71"/>
    </location>
    <ligand>
        <name>UDP-N-acetyl-alpha-D-glucosamine</name>
        <dbReference type="ChEBI" id="CHEBI:57705"/>
    </ligand>
</feature>
<feature type="binding site" evidence="1">
    <location>
        <begin position="76"/>
        <end position="77"/>
    </location>
    <ligand>
        <name>UDP-N-acetyl-alpha-D-glucosamine</name>
        <dbReference type="ChEBI" id="CHEBI:57705"/>
    </ligand>
</feature>
<feature type="binding site" evidence="1">
    <location>
        <begin position="98"/>
        <end position="100"/>
    </location>
    <ligand>
        <name>UDP-N-acetyl-alpha-D-glucosamine</name>
        <dbReference type="ChEBI" id="CHEBI:57705"/>
    </ligand>
</feature>
<feature type="binding site" evidence="1">
    <location>
        <position position="100"/>
    </location>
    <ligand>
        <name>Mg(2+)</name>
        <dbReference type="ChEBI" id="CHEBI:18420"/>
    </ligand>
</feature>
<feature type="binding site" evidence="1">
    <location>
        <position position="135"/>
    </location>
    <ligand>
        <name>UDP-N-acetyl-alpha-D-glucosamine</name>
        <dbReference type="ChEBI" id="CHEBI:57705"/>
    </ligand>
</feature>
<feature type="binding site" evidence="1">
    <location>
        <position position="150"/>
    </location>
    <ligand>
        <name>UDP-N-acetyl-alpha-D-glucosamine</name>
        <dbReference type="ChEBI" id="CHEBI:57705"/>
    </ligand>
</feature>
<feature type="binding site" evidence="1">
    <location>
        <position position="165"/>
    </location>
    <ligand>
        <name>UDP-N-acetyl-alpha-D-glucosamine</name>
        <dbReference type="ChEBI" id="CHEBI:57705"/>
    </ligand>
</feature>
<feature type="binding site" evidence="1">
    <location>
        <position position="223"/>
    </location>
    <ligand>
        <name>Mg(2+)</name>
        <dbReference type="ChEBI" id="CHEBI:18420"/>
    </ligand>
</feature>
<feature type="binding site" evidence="1">
    <location>
        <position position="223"/>
    </location>
    <ligand>
        <name>UDP-N-acetyl-alpha-D-glucosamine</name>
        <dbReference type="ChEBI" id="CHEBI:57705"/>
    </ligand>
</feature>
<feature type="binding site" evidence="1">
    <location>
        <position position="329"/>
    </location>
    <ligand>
        <name>UDP-N-acetyl-alpha-D-glucosamine</name>
        <dbReference type="ChEBI" id="CHEBI:57705"/>
    </ligand>
</feature>
<feature type="binding site" evidence="1">
    <location>
        <position position="347"/>
    </location>
    <ligand>
        <name>UDP-N-acetyl-alpha-D-glucosamine</name>
        <dbReference type="ChEBI" id="CHEBI:57705"/>
    </ligand>
</feature>
<feature type="binding site" evidence="1">
    <location>
        <position position="362"/>
    </location>
    <ligand>
        <name>UDP-N-acetyl-alpha-D-glucosamine</name>
        <dbReference type="ChEBI" id="CHEBI:57705"/>
    </ligand>
</feature>
<feature type="binding site" evidence="1">
    <location>
        <position position="373"/>
    </location>
    <ligand>
        <name>UDP-N-acetyl-alpha-D-glucosamine</name>
        <dbReference type="ChEBI" id="CHEBI:57705"/>
    </ligand>
</feature>
<feature type="binding site" evidence="1">
    <location>
        <position position="376"/>
    </location>
    <ligand>
        <name>acetyl-CoA</name>
        <dbReference type="ChEBI" id="CHEBI:57288"/>
    </ligand>
</feature>
<feature type="binding site" evidence="1">
    <location>
        <begin position="382"/>
        <end position="383"/>
    </location>
    <ligand>
        <name>acetyl-CoA</name>
        <dbReference type="ChEBI" id="CHEBI:57288"/>
    </ligand>
</feature>
<feature type="binding site" evidence="1">
    <location>
        <position position="401"/>
    </location>
    <ligand>
        <name>acetyl-CoA</name>
        <dbReference type="ChEBI" id="CHEBI:57288"/>
    </ligand>
</feature>
<feature type="binding site" evidence="1">
    <location>
        <position position="419"/>
    </location>
    <ligand>
        <name>acetyl-CoA</name>
        <dbReference type="ChEBI" id="CHEBI:57288"/>
    </ligand>
</feature>
<organism>
    <name type="scientific">Burkholderia mallei (strain NCTC 10247)</name>
    <dbReference type="NCBI Taxonomy" id="320389"/>
    <lineage>
        <taxon>Bacteria</taxon>
        <taxon>Pseudomonadati</taxon>
        <taxon>Pseudomonadota</taxon>
        <taxon>Betaproteobacteria</taxon>
        <taxon>Burkholderiales</taxon>
        <taxon>Burkholderiaceae</taxon>
        <taxon>Burkholderia</taxon>
        <taxon>pseudomallei group</taxon>
    </lineage>
</organism>
<sequence length="453" mass="47580">MNIVILAAGTGKRMRSALPKVLHPLAGRPLLSHVIDTARALAPSRLVVVIGHGAEQVRAAVAAPDVQFAVQEQQLGTGHAVRQALPLLDPSQPTLVLYGDVPLTRTATLKRLADAATDARYGVLTVTLDDPTGYGRIVRDQAGCVTRIVEQKDASPDELRIDEINTGIVVAPTAQLSMWLGALGNDNAQGEYYLTDVVEQAIEAGFEIVTTQPDDEWETLGVNSKAQLAELERIHQRNLADALLAAGVTLADPARIDVRGTLACGRDVSIDVNCVFEGDVTLADGVTIGANCVIRHAAIAAGARVDAFSHLDGATVGANAVVGPYARLRPGAVLAADAHVGNFVEVKNATLGQGSKANHLTYLGDADIGARVNVGAGTITCNYDGANKFRTVIEDDVFVGSDTQFVAPVRVGRGVTVAAGTTVWKDVAADMLVLNDKTQTAKSGYVRPVKKKS</sequence>
<gene>
    <name evidence="1" type="primary">glmU</name>
    <name type="ordered locus">BMA10247_2243</name>
</gene>
<reference key="1">
    <citation type="journal article" date="2010" name="Genome Biol. Evol.">
        <title>Continuing evolution of Burkholderia mallei through genome reduction and large-scale rearrangements.</title>
        <authorList>
            <person name="Losada L."/>
            <person name="Ronning C.M."/>
            <person name="DeShazer D."/>
            <person name="Woods D."/>
            <person name="Fedorova N."/>
            <person name="Kim H.S."/>
            <person name="Shabalina S.A."/>
            <person name="Pearson T.R."/>
            <person name="Brinkac L."/>
            <person name="Tan P."/>
            <person name="Nandi T."/>
            <person name="Crabtree J."/>
            <person name="Badger J."/>
            <person name="Beckstrom-Sternberg S."/>
            <person name="Saqib M."/>
            <person name="Schutzer S.E."/>
            <person name="Keim P."/>
            <person name="Nierman W.C."/>
        </authorList>
    </citation>
    <scope>NUCLEOTIDE SEQUENCE [LARGE SCALE GENOMIC DNA]</scope>
    <source>
        <strain>NCTC 10247</strain>
    </source>
</reference>
<proteinExistence type="inferred from homology"/>
<accession>A3MND6</accession>
<protein>
    <recommendedName>
        <fullName evidence="1">Bifunctional protein GlmU</fullName>
    </recommendedName>
    <domain>
        <recommendedName>
            <fullName evidence="1">UDP-N-acetylglucosamine pyrophosphorylase</fullName>
            <ecNumber evidence="1">2.7.7.23</ecNumber>
        </recommendedName>
        <alternativeName>
            <fullName evidence="1">N-acetylglucosamine-1-phosphate uridyltransferase</fullName>
        </alternativeName>
    </domain>
    <domain>
        <recommendedName>
            <fullName evidence="1">Glucosamine-1-phosphate N-acetyltransferase</fullName>
            <ecNumber evidence="1">2.3.1.157</ecNumber>
        </recommendedName>
    </domain>
</protein>
<dbReference type="EC" id="2.7.7.23" evidence="1"/>
<dbReference type="EC" id="2.3.1.157" evidence="1"/>
<dbReference type="EMBL" id="CP000548">
    <property type="protein sequence ID" value="ABO05232.1"/>
    <property type="molecule type" value="Genomic_DNA"/>
</dbReference>
<dbReference type="RefSeq" id="WP_004190034.1">
    <property type="nucleotide sequence ID" value="NZ_CP007802.1"/>
</dbReference>
<dbReference type="SMR" id="A3MND6"/>
<dbReference type="GeneID" id="92981044"/>
<dbReference type="KEGG" id="bmaz:BM44_1006"/>
<dbReference type="KEGG" id="bmn:BMA10247_2243"/>
<dbReference type="PATRIC" id="fig|320389.8.peg.1119"/>
<dbReference type="UniPathway" id="UPA00113">
    <property type="reaction ID" value="UER00532"/>
</dbReference>
<dbReference type="UniPathway" id="UPA00113">
    <property type="reaction ID" value="UER00533"/>
</dbReference>
<dbReference type="UniPathway" id="UPA00973"/>
<dbReference type="GO" id="GO:0005737">
    <property type="term" value="C:cytoplasm"/>
    <property type="evidence" value="ECO:0007669"/>
    <property type="project" value="UniProtKB-SubCell"/>
</dbReference>
<dbReference type="GO" id="GO:0016020">
    <property type="term" value="C:membrane"/>
    <property type="evidence" value="ECO:0007669"/>
    <property type="project" value="GOC"/>
</dbReference>
<dbReference type="GO" id="GO:0019134">
    <property type="term" value="F:glucosamine-1-phosphate N-acetyltransferase activity"/>
    <property type="evidence" value="ECO:0007669"/>
    <property type="project" value="UniProtKB-UniRule"/>
</dbReference>
<dbReference type="GO" id="GO:0000287">
    <property type="term" value="F:magnesium ion binding"/>
    <property type="evidence" value="ECO:0007669"/>
    <property type="project" value="UniProtKB-UniRule"/>
</dbReference>
<dbReference type="GO" id="GO:0003977">
    <property type="term" value="F:UDP-N-acetylglucosamine diphosphorylase activity"/>
    <property type="evidence" value="ECO:0007669"/>
    <property type="project" value="UniProtKB-UniRule"/>
</dbReference>
<dbReference type="GO" id="GO:0000902">
    <property type="term" value="P:cell morphogenesis"/>
    <property type="evidence" value="ECO:0007669"/>
    <property type="project" value="UniProtKB-UniRule"/>
</dbReference>
<dbReference type="GO" id="GO:0071555">
    <property type="term" value="P:cell wall organization"/>
    <property type="evidence" value="ECO:0007669"/>
    <property type="project" value="UniProtKB-KW"/>
</dbReference>
<dbReference type="GO" id="GO:0009245">
    <property type="term" value="P:lipid A biosynthetic process"/>
    <property type="evidence" value="ECO:0007669"/>
    <property type="project" value="UniProtKB-UniRule"/>
</dbReference>
<dbReference type="GO" id="GO:0009252">
    <property type="term" value="P:peptidoglycan biosynthetic process"/>
    <property type="evidence" value="ECO:0007669"/>
    <property type="project" value="UniProtKB-UniRule"/>
</dbReference>
<dbReference type="GO" id="GO:0008360">
    <property type="term" value="P:regulation of cell shape"/>
    <property type="evidence" value="ECO:0007669"/>
    <property type="project" value="UniProtKB-KW"/>
</dbReference>
<dbReference type="GO" id="GO:0006048">
    <property type="term" value="P:UDP-N-acetylglucosamine biosynthetic process"/>
    <property type="evidence" value="ECO:0007669"/>
    <property type="project" value="UniProtKB-UniPathway"/>
</dbReference>
<dbReference type="CDD" id="cd02540">
    <property type="entry name" value="GT2_GlmU_N_bac"/>
    <property type="match status" value="1"/>
</dbReference>
<dbReference type="CDD" id="cd03353">
    <property type="entry name" value="LbH_GlmU_C"/>
    <property type="match status" value="1"/>
</dbReference>
<dbReference type="Gene3D" id="2.160.10.10">
    <property type="entry name" value="Hexapeptide repeat proteins"/>
    <property type="match status" value="1"/>
</dbReference>
<dbReference type="Gene3D" id="3.90.550.10">
    <property type="entry name" value="Spore Coat Polysaccharide Biosynthesis Protein SpsA, Chain A"/>
    <property type="match status" value="1"/>
</dbReference>
<dbReference type="HAMAP" id="MF_01631">
    <property type="entry name" value="GlmU"/>
    <property type="match status" value="1"/>
</dbReference>
<dbReference type="InterPro" id="IPR005882">
    <property type="entry name" value="Bifunctional_GlmU"/>
</dbReference>
<dbReference type="InterPro" id="IPR050065">
    <property type="entry name" value="GlmU-like"/>
</dbReference>
<dbReference type="InterPro" id="IPR038009">
    <property type="entry name" value="GlmU_C_LbH"/>
</dbReference>
<dbReference type="InterPro" id="IPR001451">
    <property type="entry name" value="Hexapep"/>
</dbReference>
<dbReference type="InterPro" id="IPR025877">
    <property type="entry name" value="MobA-like_NTP_Trfase"/>
</dbReference>
<dbReference type="InterPro" id="IPR029044">
    <property type="entry name" value="Nucleotide-diphossugar_trans"/>
</dbReference>
<dbReference type="InterPro" id="IPR011004">
    <property type="entry name" value="Trimer_LpxA-like_sf"/>
</dbReference>
<dbReference type="NCBIfam" id="TIGR01173">
    <property type="entry name" value="glmU"/>
    <property type="match status" value="1"/>
</dbReference>
<dbReference type="PANTHER" id="PTHR43584:SF3">
    <property type="entry name" value="BIFUNCTIONAL PROTEIN GLMU"/>
    <property type="match status" value="1"/>
</dbReference>
<dbReference type="PANTHER" id="PTHR43584">
    <property type="entry name" value="NUCLEOTIDYL TRANSFERASE"/>
    <property type="match status" value="1"/>
</dbReference>
<dbReference type="Pfam" id="PF00132">
    <property type="entry name" value="Hexapep"/>
    <property type="match status" value="2"/>
</dbReference>
<dbReference type="Pfam" id="PF12804">
    <property type="entry name" value="NTP_transf_3"/>
    <property type="match status" value="1"/>
</dbReference>
<dbReference type="SUPFAM" id="SSF53448">
    <property type="entry name" value="Nucleotide-diphospho-sugar transferases"/>
    <property type="match status" value="1"/>
</dbReference>
<dbReference type="SUPFAM" id="SSF51161">
    <property type="entry name" value="Trimeric LpxA-like enzymes"/>
    <property type="match status" value="1"/>
</dbReference>